<protein>
    <recommendedName>
        <fullName evidence="1">NADH-quinone oxidoreductase subunit A</fullName>
        <ecNumber evidence="1">7.1.1.-</ecNumber>
    </recommendedName>
    <alternativeName>
        <fullName evidence="1">NADH dehydrogenase I subunit A</fullName>
    </alternativeName>
    <alternativeName>
        <fullName evidence="1">NDH-1 subunit A</fullName>
    </alternativeName>
    <alternativeName>
        <fullName evidence="1">NUO1</fullName>
    </alternativeName>
</protein>
<comment type="function">
    <text evidence="1">NDH-1 shuttles electrons from NADH, via FMN and iron-sulfur (Fe-S) centers, to quinones in the respiratory chain. The immediate electron acceptor for the enzyme in this species is believed to be ubiquinone. Couples the redox reaction to proton translocation (for every two electrons transferred, four hydrogen ions are translocated across the cytoplasmic membrane), and thus conserves the redox energy in a proton gradient.</text>
</comment>
<comment type="catalytic activity">
    <reaction evidence="1">
        <text>a quinone + NADH + 5 H(+)(in) = a quinol + NAD(+) + 4 H(+)(out)</text>
        <dbReference type="Rhea" id="RHEA:57888"/>
        <dbReference type="ChEBI" id="CHEBI:15378"/>
        <dbReference type="ChEBI" id="CHEBI:24646"/>
        <dbReference type="ChEBI" id="CHEBI:57540"/>
        <dbReference type="ChEBI" id="CHEBI:57945"/>
        <dbReference type="ChEBI" id="CHEBI:132124"/>
    </reaction>
</comment>
<comment type="subunit">
    <text evidence="1">NDH-1 is composed of 14 different subunits. Subunits NuoA, H, J, K, L, M, N constitute the membrane sector of the complex.</text>
</comment>
<comment type="subcellular location">
    <subcellularLocation>
        <location evidence="1">Cell inner membrane</location>
        <topology evidence="1">Multi-pass membrane protein</topology>
    </subcellularLocation>
</comment>
<comment type="similarity">
    <text evidence="1">Belongs to the complex I subunit 3 family.</text>
</comment>
<sequence length="123" mass="13999">MRIALNLAAYFPVLMFLLVGTGLGVALVSIGKILGPNRPDTEKNAPYECGFEAFEDARMKFDVRYYLVAILFIIFDLETAFLFPWGVALRDIGWPGFISMMIFLLEFLLGFAYIWKKGGLDWE</sequence>
<keyword id="KW-0997">Cell inner membrane</keyword>
<keyword id="KW-1003">Cell membrane</keyword>
<keyword id="KW-0472">Membrane</keyword>
<keyword id="KW-0520">NAD</keyword>
<keyword id="KW-0874">Quinone</keyword>
<keyword id="KW-1185">Reference proteome</keyword>
<keyword id="KW-1278">Translocase</keyword>
<keyword id="KW-0812">Transmembrane</keyword>
<keyword id="KW-1133">Transmembrane helix</keyword>
<keyword id="KW-0813">Transport</keyword>
<keyword id="KW-0830">Ubiquinone</keyword>
<gene>
    <name evidence="1" type="primary">nuoA</name>
    <name type="ordered locus">Bphy_2009</name>
</gene>
<organism>
    <name type="scientific">Paraburkholderia phymatum (strain DSM 17167 / CIP 108236 / LMG 21445 / STM815)</name>
    <name type="common">Burkholderia phymatum</name>
    <dbReference type="NCBI Taxonomy" id="391038"/>
    <lineage>
        <taxon>Bacteria</taxon>
        <taxon>Pseudomonadati</taxon>
        <taxon>Pseudomonadota</taxon>
        <taxon>Betaproteobacteria</taxon>
        <taxon>Burkholderiales</taxon>
        <taxon>Burkholderiaceae</taxon>
        <taxon>Paraburkholderia</taxon>
    </lineage>
</organism>
<name>NUOA_PARP8</name>
<proteinExistence type="inferred from homology"/>
<accession>B2JDM8</accession>
<evidence type="ECO:0000255" key="1">
    <source>
        <dbReference type="HAMAP-Rule" id="MF_01394"/>
    </source>
</evidence>
<feature type="chain" id="PRO_5000344078" description="NADH-quinone oxidoreductase subunit A">
    <location>
        <begin position="1"/>
        <end position="123"/>
    </location>
</feature>
<feature type="transmembrane region" description="Helical" evidence="1">
    <location>
        <begin position="11"/>
        <end position="31"/>
    </location>
</feature>
<feature type="transmembrane region" description="Helical" evidence="1">
    <location>
        <begin position="67"/>
        <end position="87"/>
    </location>
</feature>
<feature type="transmembrane region" description="Helical" evidence="1">
    <location>
        <begin position="92"/>
        <end position="112"/>
    </location>
</feature>
<reference key="1">
    <citation type="journal article" date="2014" name="Stand. Genomic Sci.">
        <title>Complete genome sequence of Burkholderia phymatum STM815(T), a broad host range and efficient nitrogen-fixing symbiont of Mimosa species.</title>
        <authorList>
            <person name="Moulin L."/>
            <person name="Klonowska A."/>
            <person name="Caroline B."/>
            <person name="Booth K."/>
            <person name="Vriezen J.A."/>
            <person name="Melkonian R."/>
            <person name="James E.K."/>
            <person name="Young J.P."/>
            <person name="Bena G."/>
            <person name="Hauser L."/>
            <person name="Land M."/>
            <person name="Kyrpides N."/>
            <person name="Bruce D."/>
            <person name="Chain P."/>
            <person name="Copeland A."/>
            <person name="Pitluck S."/>
            <person name="Woyke T."/>
            <person name="Lizotte-Waniewski M."/>
            <person name="Bristow J."/>
            <person name="Riley M."/>
        </authorList>
    </citation>
    <scope>NUCLEOTIDE SEQUENCE [LARGE SCALE GENOMIC DNA]</scope>
    <source>
        <strain>DSM 17167 / CIP 108236 / LMG 21445 / STM815</strain>
    </source>
</reference>
<dbReference type="EC" id="7.1.1.-" evidence="1"/>
<dbReference type="EMBL" id="CP001043">
    <property type="protein sequence ID" value="ACC71188.1"/>
    <property type="molecule type" value="Genomic_DNA"/>
</dbReference>
<dbReference type="SMR" id="B2JDM8"/>
<dbReference type="STRING" id="391038.Bphy_2009"/>
<dbReference type="KEGG" id="bph:Bphy_2009"/>
<dbReference type="eggNOG" id="COG0838">
    <property type="taxonomic scope" value="Bacteria"/>
</dbReference>
<dbReference type="HOGENOM" id="CLU_119549_3_1_4"/>
<dbReference type="Proteomes" id="UP000001192">
    <property type="component" value="Chromosome 1"/>
</dbReference>
<dbReference type="GO" id="GO:0030964">
    <property type="term" value="C:NADH dehydrogenase complex"/>
    <property type="evidence" value="ECO:0007669"/>
    <property type="project" value="TreeGrafter"/>
</dbReference>
<dbReference type="GO" id="GO:0005886">
    <property type="term" value="C:plasma membrane"/>
    <property type="evidence" value="ECO:0007669"/>
    <property type="project" value="UniProtKB-SubCell"/>
</dbReference>
<dbReference type="GO" id="GO:0008137">
    <property type="term" value="F:NADH dehydrogenase (ubiquinone) activity"/>
    <property type="evidence" value="ECO:0007669"/>
    <property type="project" value="InterPro"/>
</dbReference>
<dbReference type="GO" id="GO:0050136">
    <property type="term" value="F:NADH:ubiquinone reductase (non-electrogenic) activity"/>
    <property type="evidence" value="ECO:0007669"/>
    <property type="project" value="UniProtKB-UniRule"/>
</dbReference>
<dbReference type="GO" id="GO:0048038">
    <property type="term" value="F:quinone binding"/>
    <property type="evidence" value="ECO:0007669"/>
    <property type="project" value="UniProtKB-KW"/>
</dbReference>
<dbReference type="FunFam" id="1.20.58.1610:FF:000004">
    <property type="entry name" value="NADH-quinone oxidoreductase subunit A"/>
    <property type="match status" value="1"/>
</dbReference>
<dbReference type="Gene3D" id="1.20.58.1610">
    <property type="entry name" value="NADH:ubiquinone/plastoquinone oxidoreductase, chain 3"/>
    <property type="match status" value="1"/>
</dbReference>
<dbReference type="HAMAP" id="MF_01394">
    <property type="entry name" value="NDH1_NuoA"/>
    <property type="match status" value="1"/>
</dbReference>
<dbReference type="InterPro" id="IPR023043">
    <property type="entry name" value="NAD(P)H_OxRDtase_bac/plastid"/>
</dbReference>
<dbReference type="InterPro" id="IPR000440">
    <property type="entry name" value="NADH_UbQ/plastoQ_OxRdtase_su3"/>
</dbReference>
<dbReference type="InterPro" id="IPR038430">
    <property type="entry name" value="NDAH_ubi_oxred_su3_sf"/>
</dbReference>
<dbReference type="PANTHER" id="PTHR11058">
    <property type="entry name" value="NADH-UBIQUINONE OXIDOREDUCTASE CHAIN 3"/>
    <property type="match status" value="1"/>
</dbReference>
<dbReference type="PANTHER" id="PTHR11058:SF9">
    <property type="entry name" value="NADH-UBIQUINONE OXIDOREDUCTASE CHAIN 3"/>
    <property type="match status" value="1"/>
</dbReference>
<dbReference type="Pfam" id="PF00507">
    <property type="entry name" value="Oxidored_q4"/>
    <property type="match status" value="1"/>
</dbReference>